<proteinExistence type="inferred from homology"/>
<protein>
    <recommendedName>
        <fullName evidence="1">Ribosomal RNA large subunit methyltransferase E</fullName>
        <ecNumber evidence="1">2.1.1.166</ecNumber>
    </recommendedName>
    <alternativeName>
        <fullName evidence="1">23S rRNA Um2552 methyltransferase</fullName>
    </alternativeName>
    <alternativeName>
        <fullName evidence="1">rRNA (uridine-2'-O-)-methyltransferase</fullName>
    </alternativeName>
</protein>
<gene>
    <name evidence="1" type="primary">rlmE</name>
    <name evidence="1" type="synonym">rrmJ</name>
    <name type="ordered locus">MJ1376</name>
</gene>
<sequence>MGRKDKRWVLQRKRDFYYKLAKKLKYRSRASFKLMQLNEKFNVIKPGKIVLDLGCAPGGWMQVAREIVGDKGFVIGIDLQPVKPFEYDNVVAIKGDFTLEENLNKIRELIPNDEKKVDVVISDASPNISGYWDIDHARSIDLVTTALQIATEMLKERGNFVAKVFYGDMIDDYVNLVKKYFEKVYITKPQASRKESAEVYVIAKRYTGKKWEEEDKIKRVKKVENEDNELLAKKIKEIRKLKSKK</sequence>
<accession>Q58771</accession>
<reference key="1">
    <citation type="journal article" date="1996" name="Science">
        <title>Complete genome sequence of the methanogenic archaeon, Methanococcus jannaschii.</title>
        <authorList>
            <person name="Bult C.J."/>
            <person name="White O."/>
            <person name="Olsen G.J."/>
            <person name="Zhou L."/>
            <person name="Fleischmann R.D."/>
            <person name="Sutton G.G."/>
            <person name="Blake J.A."/>
            <person name="FitzGerald L.M."/>
            <person name="Clayton R.A."/>
            <person name="Gocayne J.D."/>
            <person name="Kerlavage A.R."/>
            <person name="Dougherty B.A."/>
            <person name="Tomb J.-F."/>
            <person name="Adams M.D."/>
            <person name="Reich C.I."/>
            <person name="Overbeek R."/>
            <person name="Kirkness E.F."/>
            <person name="Weinstock K.G."/>
            <person name="Merrick J.M."/>
            <person name="Glodek A."/>
            <person name="Scott J.L."/>
            <person name="Geoghagen N.S.M."/>
            <person name="Weidman J.F."/>
            <person name="Fuhrmann J.L."/>
            <person name="Nguyen D."/>
            <person name="Utterback T.R."/>
            <person name="Kelley J.M."/>
            <person name="Peterson J.D."/>
            <person name="Sadow P.W."/>
            <person name="Hanna M.C."/>
            <person name="Cotton M.D."/>
            <person name="Roberts K.M."/>
            <person name="Hurst M.A."/>
            <person name="Kaine B.P."/>
            <person name="Borodovsky M."/>
            <person name="Klenk H.-P."/>
            <person name="Fraser C.M."/>
            <person name="Smith H.O."/>
            <person name="Woese C.R."/>
            <person name="Venter J.C."/>
        </authorList>
    </citation>
    <scope>NUCLEOTIDE SEQUENCE [LARGE SCALE GENOMIC DNA]</scope>
    <source>
        <strain>ATCC 43067 / DSM 2661 / JAL-1 / JCM 10045 / NBRC 100440</strain>
    </source>
</reference>
<evidence type="ECO:0000255" key="1">
    <source>
        <dbReference type="HAMAP-Rule" id="MF_01547"/>
    </source>
</evidence>
<name>RLME_METJA</name>
<comment type="function">
    <text evidence="1">Specifically methylates the uridine in position 2552 of 23S rRNA at the 2'-O position of the ribose in the fully assembled 50S ribosomal subunit.</text>
</comment>
<comment type="catalytic activity">
    <reaction evidence="1">
        <text>uridine(2552) in 23S rRNA + S-adenosyl-L-methionine = 2'-O-methyluridine(2552) in 23S rRNA + S-adenosyl-L-homocysteine + H(+)</text>
        <dbReference type="Rhea" id="RHEA:42720"/>
        <dbReference type="Rhea" id="RHEA-COMP:10202"/>
        <dbReference type="Rhea" id="RHEA-COMP:10203"/>
        <dbReference type="ChEBI" id="CHEBI:15378"/>
        <dbReference type="ChEBI" id="CHEBI:57856"/>
        <dbReference type="ChEBI" id="CHEBI:59789"/>
        <dbReference type="ChEBI" id="CHEBI:65315"/>
        <dbReference type="ChEBI" id="CHEBI:74478"/>
        <dbReference type="EC" id="2.1.1.166"/>
    </reaction>
</comment>
<comment type="subcellular location">
    <subcellularLocation>
        <location evidence="1">Cytoplasm</location>
    </subcellularLocation>
</comment>
<comment type="similarity">
    <text evidence="1">Belongs to the class I-like SAM-binding methyltransferase superfamily. RNA methyltransferase RlmE family.</text>
</comment>
<feature type="chain" id="PRO_0000155567" description="Ribosomal RNA large subunit methyltransferase E">
    <location>
        <begin position="1"/>
        <end position="245"/>
    </location>
</feature>
<feature type="active site" description="Proton acceptor" evidence="1">
    <location>
        <position position="163"/>
    </location>
</feature>
<feature type="binding site" evidence="1">
    <location>
        <position position="58"/>
    </location>
    <ligand>
        <name>S-adenosyl-L-methionine</name>
        <dbReference type="ChEBI" id="CHEBI:59789"/>
    </ligand>
</feature>
<feature type="binding site" evidence="1">
    <location>
        <position position="60"/>
    </location>
    <ligand>
        <name>S-adenosyl-L-methionine</name>
        <dbReference type="ChEBI" id="CHEBI:59789"/>
    </ligand>
</feature>
<feature type="binding site" evidence="1">
    <location>
        <position position="78"/>
    </location>
    <ligand>
        <name>S-adenosyl-L-methionine</name>
        <dbReference type="ChEBI" id="CHEBI:59789"/>
    </ligand>
</feature>
<feature type="binding site" evidence="1">
    <location>
        <position position="96"/>
    </location>
    <ligand>
        <name>S-adenosyl-L-methionine</name>
        <dbReference type="ChEBI" id="CHEBI:59789"/>
    </ligand>
</feature>
<feature type="binding site" evidence="1">
    <location>
        <position position="123"/>
    </location>
    <ligand>
        <name>S-adenosyl-L-methionine</name>
        <dbReference type="ChEBI" id="CHEBI:59789"/>
    </ligand>
</feature>
<organism>
    <name type="scientific">Methanocaldococcus jannaschii (strain ATCC 43067 / DSM 2661 / JAL-1 / JCM 10045 / NBRC 100440)</name>
    <name type="common">Methanococcus jannaschii</name>
    <dbReference type="NCBI Taxonomy" id="243232"/>
    <lineage>
        <taxon>Archaea</taxon>
        <taxon>Methanobacteriati</taxon>
        <taxon>Methanobacteriota</taxon>
        <taxon>Methanomada group</taxon>
        <taxon>Methanococci</taxon>
        <taxon>Methanococcales</taxon>
        <taxon>Methanocaldococcaceae</taxon>
        <taxon>Methanocaldococcus</taxon>
    </lineage>
</organism>
<dbReference type="EC" id="2.1.1.166" evidence="1"/>
<dbReference type="EMBL" id="L77117">
    <property type="protein sequence ID" value="AAB99383.1"/>
    <property type="molecule type" value="Genomic_DNA"/>
</dbReference>
<dbReference type="PIR" id="G64471">
    <property type="entry name" value="G64471"/>
</dbReference>
<dbReference type="RefSeq" id="WP_010870893.1">
    <property type="nucleotide sequence ID" value="NC_000909.1"/>
</dbReference>
<dbReference type="SMR" id="Q58771"/>
<dbReference type="FunCoup" id="Q58771">
    <property type="interactions" value="192"/>
</dbReference>
<dbReference type="STRING" id="243232.MJ_1376"/>
<dbReference type="PaxDb" id="243232-MJ_1376"/>
<dbReference type="EnsemblBacteria" id="AAB99383">
    <property type="protein sequence ID" value="AAB99383"/>
    <property type="gene ID" value="MJ_1376"/>
</dbReference>
<dbReference type="GeneID" id="1452279"/>
<dbReference type="KEGG" id="mja:MJ_1376"/>
<dbReference type="eggNOG" id="arCOG00079">
    <property type="taxonomic scope" value="Archaea"/>
</dbReference>
<dbReference type="HOGENOM" id="CLU_009422_4_4_2"/>
<dbReference type="InParanoid" id="Q58771"/>
<dbReference type="OrthoDB" id="26307at2157"/>
<dbReference type="PhylomeDB" id="Q58771"/>
<dbReference type="Proteomes" id="UP000000805">
    <property type="component" value="Chromosome"/>
</dbReference>
<dbReference type="GO" id="GO:0005737">
    <property type="term" value="C:cytoplasm"/>
    <property type="evidence" value="ECO:0007669"/>
    <property type="project" value="UniProtKB-SubCell"/>
</dbReference>
<dbReference type="GO" id="GO:0008173">
    <property type="term" value="F:RNA methyltransferase activity"/>
    <property type="evidence" value="ECO:0000318"/>
    <property type="project" value="GO_Central"/>
</dbReference>
<dbReference type="GO" id="GO:0008650">
    <property type="term" value="F:rRNA (uridine-2'-O-)-methyltransferase activity"/>
    <property type="evidence" value="ECO:0007669"/>
    <property type="project" value="UniProtKB-UniRule"/>
</dbReference>
<dbReference type="GO" id="GO:0001510">
    <property type="term" value="P:RNA methylation"/>
    <property type="evidence" value="ECO:0000318"/>
    <property type="project" value="GO_Central"/>
</dbReference>
<dbReference type="Gene3D" id="3.40.50.150">
    <property type="entry name" value="Vaccinia Virus protein VP39"/>
    <property type="match status" value="1"/>
</dbReference>
<dbReference type="HAMAP" id="MF_01547">
    <property type="entry name" value="RNA_methyltr_E"/>
    <property type="match status" value="1"/>
</dbReference>
<dbReference type="InterPro" id="IPR050082">
    <property type="entry name" value="RNA_methyltr_RlmE"/>
</dbReference>
<dbReference type="InterPro" id="IPR002877">
    <property type="entry name" value="RNA_MeTrfase_FtsJ_dom"/>
</dbReference>
<dbReference type="InterPro" id="IPR015507">
    <property type="entry name" value="rRNA-MeTfrase_E"/>
</dbReference>
<dbReference type="InterPro" id="IPR004512">
    <property type="entry name" value="rRNA_MeTrfase_gammaproteobac"/>
</dbReference>
<dbReference type="InterPro" id="IPR029063">
    <property type="entry name" value="SAM-dependent_MTases_sf"/>
</dbReference>
<dbReference type="NCBIfam" id="TIGR00438">
    <property type="entry name" value="rrmJ"/>
    <property type="match status" value="1"/>
</dbReference>
<dbReference type="PANTHER" id="PTHR10920:SF13">
    <property type="entry name" value="PRE-RRNA 2'-O-RIBOSE RNA METHYLTRANSFERASE FTSJ3"/>
    <property type="match status" value="1"/>
</dbReference>
<dbReference type="PANTHER" id="PTHR10920">
    <property type="entry name" value="RIBOSOMAL RNA METHYLTRANSFERASE"/>
    <property type="match status" value="1"/>
</dbReference>
<dbReference type="Pfam" id="PF01728">
    <property type="entry name" value="FtsJ"/>
    <property type="match status" value="1"/>
</dbReference>
<dbReference type="PIRSF" id="PIRSF005461">
    <property type="entry name" value="23S_rRNA_mtase"/>
    <property type="match status" value="1"/>
</dbReference>
<dbReference type="SUPFAM" id="SSF53335">
    <property type="entry name" value="S-adenosyl-L-methionine-dependent methyltransferases"/>
    <property type="match status" value="1"/>
</dbReference>
<keyword id="KW-0963">Cytoplasm</keyword>
<keyword id="KW-0489">Methyltransferase</keyword>
<keyword id="KW-1185">Reference proteome</keyword>
<keyword id="KW-0698">rRNA processing</keyword>
<keyword id="KW-0949">S-adenosyl-L-methionine</keyword>
<keyword id="KW-0808">Transferase</keyword>